<keyword id="KW-0131">Cell cycle</keyword>
<keyword id="KW-0132">Cell division</keyword>
<keyword id="KW-0133">Cell shape</keyword>
<keyword id="KW-0961">Cell wall biogenesis/degradation</keyword>
<keyword id="KW-0963">Cytoplasm</keyword>
<keyword id="KW-0274">FAD</keyword>
<keyword id="KW-0285">Flavoprotein</keyword>
<keyword id="KW-0521">NADP</keyword>
<keyword id="KW-0560">Oxidoreductase</keyword>
<keyword id="KW-0573">Peptidoglycan synthesis</keyword>
<keyword id="KW-1185">Reference proteome</keyword>
<accession>A1KBU9</accession>
<gene>
    <name evidence="1" type="primary">murB</name>
    <name type="ordered locus">azo3689</name>
</gene>
<name>MURB_AZOSB</name>
<comment type="function">
    <text evidence="1">Cell wall formation.</text>
</comment>
<comment type="catalytic activity">
    <reaction evidence="1">
        <text>UDP-N-acetyl-alpha-D-muramate + NADP(+) = UDP-N-acetyl-3-O-(1-carboxyvinyl)-alpha-D-glucosamine + NADPH + H(+)</text>
        <dbReference type="Rhea" id="RHEA:12248"/>
        <dbReference type="ChEBI" id="CHEBI:15378"/>
        <dbReference type="ChEBI" id="CHEBI:57783"/>
        <dbReference type="ChEBI" id="CHEBI:58349"/>
        <dbReference type="ChEBI" id="CHEBI:68483"/>
        <dbReference type="ChEBI" id="CHEBI:70757"/>
        <dbReference type="EC" id="1.3.1.98"/>
    </reaction>
</comment>
<comment type="cofactor">
    <cofactor evidence="1">
        <name>FAD</name>
        <dbReference type="ChEBI" id="CHEBI:57692"/>
    </cofactor>
</comment>
<comment type="pathway">
    <text evidence="1">Cell wall biogenesis; peptidoglycan biosynthesis.</text>
</comment>
<comment type="subcellular location">
    <subcellularLocation>
        <location evidence="1">Cytoplasm</location>
    </subcellularLocation>
</comment>
<comment type="similarity">
    <text evidence="1">Belongs to the MurB family.</text>
</comment>
<organism>
    <name type="scientific">Azoarcus sp. (strain BH72)</name>
    <dbReference type="NCBI Taxonomy" id="418699"/>
    <lineage>
        <taxon>Bacteria</taxon>
        <taxon>Pseudomonadati</taxon>
        <taxon>Pseudomonadota</taxon>
        <taxon>Betaproteobacteria</taxon>
        <taxon>Rhodocyclales</taxon>
        <taxon>Zoogloeaceae</taxon>
        <taxon>Azoarcus</taxon>
    </lineage>
</organism>
<dbReference type="EC" id="1.3.1.98" evidence="1"/>
<dbReference type="EMBL" id="AM406670">
    <property type="protein sequence ID" value="CAL96305.1"/>
    <property type="molecule type" value="Genomic_DNA"/>
</dbReference>
<dbReference type="RefSeq" id="WP_011767411.1">
    <property type="nucleotide sequence ID" value="NC_008702.1"/>
</dbReference>
<dbReference type="SMR" id="A1KBU9"/>
<dbReference type="STRING" id="62928.azo3689"/>
<dbReference type="KEGG" id="azo:azo3689"/>
<dbReference type="eggNOG" id="COG0812">
    <property type="taxonomic scope" value="Bacteria"/>
</dbReference>
<dbReference type="HOGENOM" id="CLU_035304_0_0_4"/>
<dbReference type="UniPathway" id="UPA00219"/>
<dbReference type="Proteomes" id="UP000002588">
    <property type="component" value="Chromosome"/>
</dbReference>
<dbReference type="GO" id="GO:0005829">
    <property type="term" value="C:cytosol"/>
    <property type="evidence" value="ECO:0007669"/>
    <property type="project" value="TreeGrafter"/>
</dbReference>
<dbReference type="GO" id="GO:0071949">
    <property type="term" value="F:FAD binding"/>
    <property type="evidence" value="ECO:0007669"/>
    <property type="project" value="InterPro"/>
</dbReference>
<dbReference type="GO" id="GO:0008762">
    <property type="term" value="F:UDP-N-acetylmuramate dehydrogenase activity"/>
    <property type="evidence" value="ECO:0007669"/>
    <property type="project" value="UniProtKB-UniRule"/>
</dbReference>
<dbReference type="GO" id="GO:0051301">
    <property type="term" value="P:cell division"/>
    <property type="evidence" value="ECO:0007669"/>
    <property type="project" value="UniProtKB-KW"/>
</dbReference>
<dbReference type="GO" id="GO:0071555">
    <property type="term" value="P:cell wall organization"/>
    <property type="evidence" value="ECO:0007669"/>
    <property type="project" value="UniProtKB-KW"/>
</dbReference>
<dbReference type="GO" id="GO:0009252">
    <property type="term" value="P:peptidoglycan biosynthetic process"/>
    <property type="evidence" value="ECO:0007669"/>
    <property type="project" value="UniProtKB-UniRule"/>
</dbReference>
<dbReference type="GO" id="GO:0008360">
    <property type="term" value="P:regulation of cell shape"/>
    <property type="evidence" value="ECO:0007669"/>
    <property type="project" value="UniProtKB-KW"/>
</dbReference>
<dbReference type="Gene3D" id="3.30.465.10">
    <property type="match status" value="1"/>
</dbReference>
<dbReference type="Gene3D" id="3.90.78.10">
    <property type="entry name" value="UDP-N-acetylenolpyruvoylglucosamine reductase, C-terminal domain"/>
    <property type="match status" value="1"/>
</dbReference>
<dbReference type="Gene3D" id="3.30.43.10">
    <property type="entry name" value="Uridine Diphospho-n-acetylenolpyruvylglucosamine Reductase, domain 2"/>
    <property type="match status" value="1"/>
</dbReference>
<dbReference type="HAMAP" id="MF_00037">
    <property type="entry name" value="MurB"/>
    <property type="match status" value="1"/>
</dbReference>
<dbReference type="InterPro" id="IPR016166">
    <property type="entry name" value="FAD-bd_PCMH"/>
</dbReference>
<dbReference type="InterPro" id="IPR036318">
    <property type="entry name" value="FAD-bd_PCMH-like_sf"/>
</dbReference>
<dbReference type="InterPro" id="IPR016167">
    <property type="entry name" value="FAD-bd_PCMH_sub1"/>
</dbReference>
<dbReference type="InterPro" id="IPR016169">
    <property type="entry name" value="FAD-bd_PCMH_sub2"/>
</dbReference>
<dbReference type="InterPro" id="IPR003170">
    <property type="entry name" value="MurB"/>
</dbReference>
<dbReference type="InterPro" id="IPR011601">
    <property type="entry name" value="MurB_C"/>
</dbReference>
<dbReference type="InterPro" id="IPR036635">
    <property type="entry name" value="MurB_C_sf"/>
</dbReference>
<dbReference type="InterPro" id="IPR006094">
    <property type="entry name" value="Oxid_FAD_bind_N"/>
</dbReference>
<dbReference type="NCBIfam" id="TIGR00179">
    <property type="entry name" value="murB"/>
    <property type="match status" value="1"/>
</dbReference>
<dbReference type="NCBIfam" id="NF000755">
    <property type="entry name" value="PRK00046.1"/>
    <property type="match status" value="1"/>
</dbReference>
<dbReference type="NCBIfam" id="NF010478">
    <property type="entry name" value="PRK13903.1"/>
    <property type="match status" value="1"/>
</dbReference>
<dbReference type="PANTHER" id="PTHR21071">
    <property type="entry name" value="UDP-N-ACETYLENOLPYRUVOYLGLUCOSAMINE REDUCTASE"/>
    <property type="match status" value="1"/>
</dbReference>
<dbReference type="PANTHER" id="PTHR21071:SF4">
    <property type="entry name" value="UDP-N-ACETYLENOLPYRUVOYLGLUCOSAMINE REDUCTASE"/>
    <property type="match status" value="1"/>
</dbReference>
<dbReference type="Pfam" id="PF01565">
    <property type="entry name" value="FAD_binding_4"/>
    <property type="match status" value="1"/>
</dbReference>
<dbReference type="Pfam" id="PF02873">
    <property type="entry name" value="MurB_C"/>
    <property type="match status" value="1"/>
</dbReference>
<dbReference type="SUPFAM" id="SSF56176">
    <property type="entry name" value="FAD-binding/transporter-associated domain-like"/>
    <property type="match status" value="1"/>
</dbReference>
<dbReference type="SUPFAM" id="SSF56194">
    <property type="entry name" value="Uridine diphospho-N-Acetylenolpyruvylglucosamine reductase, MurB, C-terminal domain"/>
    <property type="match status" value="1"/>
</dbReference>
<dbReference type="PROSITE" id="PS51387">
    <property type="entry name" value="FAD_PCMH"/>
    <property type="match status" value="1"/>
</dbReference>
<protein>
    <recommendedName>
        <fullName evidence="1">UDP-N-acetylenolpyruvoylglucosamine reductase</fullName>
        <ecNumber evidence="1">1.3.1.98</ecNumber>
    </recommendedName>
    <alternativeName>
        <fullName evidence="1">UDP-N-acetylmuramate dehydrogenase</fullName>
    </alternativeName>
</protein>
<sequence>MNIAPPLAITTDADLGPLNTFGLPARAARLLRVRGEEDVRALLAEPGWRGEPRLVLGGGSNLVLRGDFAGTVLKVEIAGRRLVGVREDADGAAWIVEAGAGECWHDFVRWTLAQGWPGLENLSLIPGTVGAAPIQNIGAYGVELTERFDALDAIDLDSGETRSFDRTTCAFGYRDSVFKRAAGRWLVLRVRFRLPQAWAPVGRYADVAAELAARGIAAPGAADISDAVIAIRRRKLPDPAKIGNAGSFFKNPVVDAAAWARLAAAHPEAPHYPQRDGSIKLAAGWLIEQAGWKGRNLGPVGCYERQALVLVNRGGACGEDVARLAAAIQADVEARFGIRLEPEPVFV</sequence>
<reference key="1">
    <citation type="journal article" date="2006" name="Nat. Biotechnol.">
        <title>Complete genome of the mutualistic, N2-fixing grass endophyte Azoarcus sp. strain BH72.</title>
        <authorList>
            <person name="Krause A."/>
            <person name="Ramakumar A."/>
            <person name="Bartels D."/>
            <person name="Battistoni F."/>
            <person name="Bekel T."/>
            <person name="Boch J."/>
            <person name="Boehm M."/>
            <person name="Friedrich F."/>
            <person name="Hurek T."/>
            <person name="Krause L."/>
            <person name="Linke B."/>
            <person name="McHardy A.C."/>
            <person name="Sarkar A."/>
            <person name="Schneiker S."/>
            <person name="Syed A.A."/>
            <person name="Thauer R."/>
            <person name="Vorhoelter F.-J."/>
            <person name="Weidner S."/>
            <person name="Puehler A."/>
            <person name="Reinhold-Hurek B."/>
            <person name="Kaiser O."/>
            <person name="Goesmann A."/>
        </authorList>
    </citation>
    <scope>NUCLEOTIDE SEQUENCE [LARGE SCALE GENOMIC DNA]</scope>
    <source>
        <strain>BH72</strain>
    </source>
</reference>
<evidence type="ECO:0000255" key="1">
    <source>
        <dbReference type="HAMAP-Rule" id="MF_00037"/>
    </source>
</evidence>
<feature type="chain" id="PRO_0000332447" description="UDP-N-acetylenolpyruvoylglucosamine reductase">
    <location>
        <begin position="1"/>
        <end position="347"/>
    </location>
</feature>
<feature type="domain" description="FAD-binding PCMH-type" evidence="1">
    <location>
        <begin position="23"/>
        <end position="197"/>
    </location>
</feature>
<feature type="active site" evidence="1">
    <location>
        <position position="174"/>
    </location>
</feature>
<feature type="active site" description="Proton donor" evidence="1">
    <location>
        <position position="247"/>
    </location>
</feature>
<feature type="active site" evidence="1">
    <location>
        <position position="343"/>
    </location>
</feature>
<proteinExistence type="inferred from homology"/>